<name>Y4042_BORPA</name>
<sequence length="177" mass="19268">MTDTATRLAFARAAQAQRRLHRRPPASPRASPGARDGGSPTQRCGQAYESAALRWLARQGLRPLARNLRCRAGEIDLAMRDGEVLVLVEVRARAHAGYGGAAASIGASKQGRLARAAALLLPVLLRRHWPGAPPPVRFDVVAFEAGRPHWLRGAFWLAEHAPAQGRRGQDAQGWRVR</sequence>
<gene>
    <name type="ordered locus">BPP4042</name>
</gene>
<accession>Q7W3J1</accession>
<dbReference type="EMBL" id="BX640435">
    <property type="protein sequence ID" value="CAE39325.1"/>
    <property type="molecule type" value="Genomic_DNA"/>
</dbReference>
<dbReference type="RefSeq" id="WP_010929358.1">
    <property type="nucleotide sequence ID" value="NC_002928.3"/>
</dbReference>
<dbReference type="SMR" id="Q7W3J1"/>
<dbReference type="GeneID" id="93205841"/>
<dbReference type="KEGG" id="bpa:BPP4042"/>
<dbReference type="HOGENOM" id="CLU_115353_1_0_4"/>
<dbReference type="Proteomes" id="UP000001421">
    <property type="component" value="Chromosome"/>
</dbReference>
<dbReference type="GO" id="GO:0003676">
    <property type="term" value="F:nucleic acid binding"/>
    <property type="evidence" value="ECO:0007669"/>
    <property type="project" value="InterPro"/>
</dbReference>
<dbReference type="Gene3D" id="3.40.1350.10">
    <property type="match status" value="1"/>
</dbReference>
<dbReference type="HAMAP" id="MF_00048">
    <property type="entry name" value="UPF0102"/>
    <property type="match status" value="1"/>
</dbReference>
<dbReference type="InterPro" id="IPR011335">
    <property type="entry name" value="Restrct_endonuc-II-like"/>
</dbReference>
<dbReference type="InterPro" id="IPR011856">
    <property type="entry name" value="tRNA_endonuc-like_dom_sf"/>
</dbReference>
<dbReference type="InterPro" id="IPR003509">
    <property type="entry name" value="UPF0102_YraN-like"/>
</dbReference>
<dbReference type="NCBIfam" id="NF009150">
    <property type="entry name" value="PRK12497.1-3"/>
    <property type="match status" value="1"/>
</dbReference>
<dbReference type="NCBIfam" id="NF011278">
    <property type="entry name" value="PRK14685.1"/>
    <property type="match status" value="1"/>
</dbReference>
<dbReference type="NCBIfam" id="TIGR00252">
    <property type="entry name" value="YraN family protein"/>
    <property type="match status" value="1"/>
</dbReference>
<dbReference type="PANTHER" id="PTHR34039">
    <property type="entry name" value="UPF0102 PROTEIN YRAN"/>
    <property type="match status" value="1"/>
</dbReference>
<dbReference type="PANTHER" id="PTHR34039:SF1">
    <property type="entry name" value="UPF0102 PROTEIN YRAN"/>
    <property type="match status" value="1"/>
</dbReference>
<dbReference type="Pfam" id="PF02021">
    <property type="entry name" value="UPF0102"/>
    <property type="match status" value="1"/>
</dbReference>
<dbReference type="SUPFAM" id="SSF52980">
    <property type="entry name" value="Restriction endonuclease-like"/>
    <property type="match status" value="1"/>
</dbReference>
<evidence type="ECO:0000255" key="1">
    <source>
        <dbReference type="HAMAP-Rule" id="MF_00048"/>
    </source>
</evidence>
<evidence type="ECO:0000256" key="2">
    <source>
        <dbReference type="SAM" id="MobiDB-lite"/>
    </source>
</evidence>
<feature type="chain" id="PRO_0000336133" description="UPF0102 protein BPP4042">
    <location>
        <begin position="1"/>
        <end position="177"/>
    </location>
</feature>
<feature type="region of interest" description="Disordered" evidence="2">
    <location>
        <begin position="13"/>
        <end position="43"/>
    </location>
</feature>
<reference key="1">
    <citation type="journal article" date="2003" name="Nat. Genet.">
        <title>Comparative analysis of the genome sequences of Bordetella pertussis, Bordetella parapertussis and Bordetella bronchiseptica.</title>
        <authorList>
            <person name="Parkhill J."/>
            <person name="Sebaihia M."/>
            <person name="Preston A."/>
            <person name="Murphy L.D."/>
            <person name="Thomson N.R."/>
            <person name="Harris D.E."/>
            <person name="Holden M.T.G."/>
            <person name="Churcher C.M."/>
            <person name="Bentley S.D."/>
            <person name="Mungall K.L."/>
            <person name="Cerdeno-Tarraga A.-M."/>
            <person name="Temple L."/>
            <person name="James K.D."/>
            <person name="Harris B."/>
            <person name="Quail M.A."/>
            <person name="Achtman M."/>
            <person name="Atkin R."/>
            <person name="Baker S."/>
            <person name="Basham D."/>
            <person name="Bason N."/>
            <person name="Cherevach I."/>
            <person name="Chillingworth T."/>
            <person name="Collins M."/>
            <person name="Cronin A."/>
            <person name="Davis P."/>
            <person name="Doggett J."/>
            <person name="Feltwell T."/>
            <person name="Goble A."/>
            <person name="Hamlin N."/>
            <person name="Hauser H."/>
            <person name="Holroyd S."/>
            <person name="Jagels K."/>
            <person name="Leather S."/>
            <person name="Moule S."/>
            <person name="Norberczak H."/>
            <person name="O'Neil S."/>
            <person name="Ormond D."/>
            <person name="Price C."/>
            <person name="Rabbinowitsch E."/>
            <person name="Rutter S."/>
            <person name="Sanders M."/>
            <person name="Saunders D."/>
            <person name="Seeger K."/>
            <person name="Sharp S."/>
            <person name="Simmonds M."/>
            <person name="Skelton J."/>
            <person name="Squares R."/>
            <person name="Squares S."/>
            <person name="Stevens K."/>
            <person name="Unwin L."/>
            <person name="Whitehead S."/>
            <person name="Barrell B.G."/>
            <person name="Maskell D.J."/>
        </authorList>
    </citation>
    <scope>NUCLEOTIDE SEQUENCE [LARGE SCALE GENOMIC DNA]</scope>
    <source>
        <strain>12822 / ATCC BAA-587 / NCTC 13253</strain>
    </source>
</reference>
<protein>
    <recommendedName>
        <fullName evidence="1">UPF0102 protein BPP4042</fullName>
    </recommendedName>
</protein>
<organism>
    <name type="scientific">Bordetella parapertussis (strain 12822 / ATCC BAA-587 / NCTC 13253)</name>
    <dbReference type="NCBI Taxonomy" id="257311"/>
    <lineage>
        <taxon>Bacteria</taxon>
        <taxon>Pseudomonadati</taxon>
        <taxon>Pseudomonadota</taxon>
        <taxon>Betaproteobacteria</taxon>
        <taxon>Burkholderiales</taxon>
        <taxon>Alcaligenaceae</taxon>
        <taxon>Bordetella</taxon>
    </lineage>
</organism>
<proteinExistence type="inferred from homology"/>
<comment type="similarity">
    <text evidence="1">Belongs to the UPF0102 family.</text>
</comment>